<gene>
    <name evidence="1" type="primary">murE</name>
    <name type="ordered locus">XCC0721</name>
</gene>
<evidence type="ECO:0000255" key="1">
    <source>
        <dbReference type="HAMAP-Rule" id="MF_00208"/>
    </source>
</evidence>
<protein>
    <recommendedName>
        <fullName evidence="1">UDP-N-acetylmuramoyl-L-alanyl-D-glutamate--2,6-diaminopimelate ligase</fullName>
        <ecNumber evidence="1">6.3.2.13</ecNumber>
    </recommendedName>
    <alternativeName>
        <fullName evidence="1">Meso-A2pm-adding enzyme</fullName>
    </alternativeName>
    <alternativeName>
        <fullName evidence="1">Meso-diaminopimelate-adding enzyme</fullName>
    </alternativeName>
    <alternativeName>
        <fullName evidence="1">UDP-MurNAc-L-Ala-D-Glu:meso-diaminopimelate ligase</fullName>
    </alternativeName>
    <alternativeName>
        <fullName evidence="1">UDP-MurNAc-tripeptide synthetase</fullName>
    </alternativeName>
    <alternativeName>
        <fullName evidence="1">UDP-N-acetylmuramyl-tripeptide synthetase</fullName>
    </alternativeName>
</protein>
<proteinExistence type="inferred from homology"/>
<name>MURE_XANCP</name>
<dbReference type="EC" id="6.3.2.13" evidence="1"/>
<dbReference type="EMBL" id="AE008922">
    <property type="protein sequence ID" value="AAM40036.1"/>
    <property type="molecule type" value="Genomic_DNA"/>
</dbReference>
<dbReference type="RefSeq" id="NP_636112.1">
    <property type="nucleotide sequence ID" value="NC_003902.1"/>
</dbReference>
<dbReference type="SMR" id="Q8PCK4"/>
<dbReference type="STRING" id="190485.XCC0721"/>
<dbReference type="EnsemblBacteria" id="AAM40036">
    <property type="protein sequence ID" value="AAM40036"/>
    <property type="gene ID" value="XCC0721"/>
</dbReference>
<dbReference type="KEGG" id="xcc:XCC0721"/>
<dbReference type="PATRIC" id="fig|190485.4.peg.785"/>
<dbReference type="eggNOG" id="COG0769">
    <property type="taxonomic scope" value="Bacteria"/>
</dbReference>
<dbReference type="HOGENOM" id="CLU_022291_3_2_6"/>
<dbReference type="OrthoDB" id="9800958at2"/>
<dbReference type="UniPathway" id="UPA00219"/>
<dbReference type="Proteomes" id="UP000001010">
    <property type="component" value="Chromosome"/>
</dbReference>
<dbReference type="GO" id="GO:0005737">
    <property type="term" value="C:cytoplasm"/>
    <property type="evidence" value="ECO:0007669"/>
    <property type="project" value="UniProtKB-SubCell"/>
</dbReference>
<dbReference type="GO" id="GO:0005524">
    <property type="term" value="F:ATP binding"/>
    <property type="evidence" value="ECO:0007669"/>
    <property type="project" value="UniProtKB-UniRule"/>
</dbReference>
<dbReference type="GO" id="GO:0000287">
    <property type="term" value="F:magnesium ion binding"/>
    <property type="evidence" value="ECO:0007669"/>
    <property type="project" value="UniProtKB-UniRule"/>
</dbReference>
<dbReference type="GO" id="GO:0008765">
    <property type="term" value="F:UDP-N-acetylmuramoylalanyl-D-glutamate-2,6-diaminopimelate ligase activity"/>
    <property type="evidence" value="ECO:0007669"/>
    <property type="project" value="UniProtKB-UniRule"/>
</dbReference>
<dbReference type="GO" id="GO:0051301">
    <property type="term" value="P:cell division"/>
    <property type="evidence" value="ECO:0007669"/>
    <property type="project" value="UniProtKB-KW"/>
</dbReference>
<dbReference type="GO" id="GO:0071555">
    <property type="term" value="P:cell wall organization"/>
    <property type="evidence" value="ECO:0007669"/>
    <property type="project" value="UniProtKB-KW"/>
</dbReference>
<dbReference type="GO" id="GO:0009252">
    <property type="term" value="P:peptidoglycan biosynthetic process"/>
    <property type="evidence" value="ECO:0007669"/>
    <property type="project" value="UniProtKB-UniRule"/>
</dbReference>
<dbReference type="GO" id="GO:0008360">
    <property type="term" value="P:regulation of cell shape"/>
    <property type="evidence" value="ECO:0007669"/>
    <property type="project" value="UniProtKB-KW"/>
</dbReference>
<dbReference type="Gene3D" id="3.90.190.20">
    <property type="entry name" value="Mur ligase, C-terminal domain"/>
    <property type="match status" value="1"/>
</dbReference>
<dbReference type="Gene3D" id="3.40.1190.10">
    <property type="entry name" value="Mur-like, catalytic domain"/>
    <property type="match status" value="1"/>
</dbReference>
<dbReference type="Gene3D" id="3.40.1390.10">
    <property type="entry name" value="MurE/MurF, N-terminal domain"/>
    <property type="match status" value="1"/>
</dbReference>
<dbReference type="HAMAP" id="MF_00208">
    <property type="entry name" value="MurE"/>
    <property type="match status" value="1"/>
</dbReference>
<dbReference type="InterPro" id="IPR036565">
    <property type="entry name" value="Mur-like_cat_sf"/>
</dbReference>
<dbReference type="InterPro" id="IPR004101">
    <property type="entry name" value="Mur_ligase_C"/>
</dbReference>
<dbReference type="InterPro" id="IPR036615">
    <property type="entry name" value="Mur_ligase_C_dom_sf"/>
</dbReference>
<dbReference type="InterPro" id="IPR013221">
    <property type="entry name" value="Mur_ligase_cen"/>
</dbReference>
<dbReference type="InterPro" id="IPR000713">
    <property type="entry name" value="Mur_ligase_N"/>
</dbReference>
<dbReference type="InterPro" id="IPR035911">
    <property type="entry name" value="MurE/MurF_N"/>
</dbReference>
<dbReference type="InterPro" id="IPR005761">
    <property type="entry name" value="UDP-N-AcMur-Glu-dNH2Pim_ligase"/>
</dbReference>
<dbReference type="NCBIfam" id="TIGR01085">
    <property type="entry name" value="murE"/>
    <property type="match status" value="1"/>
</dbReference>
<dbReference type="NCBIfam" id="NF001124">
    <property type="entry name" value="PRK00139.1-2"/>
    <property type="match status" value="1"/>
</dbReference>
<dbReference type="NCBIfam" id="NF001126">
    <property type="entry name" value="PRK00139.1-4"/>
    <property type="match status" value="1"/>
</dbReference>
<dbReference type="PANTHER" id="PTHR23135">
    <property type="entry name" value="MUR LIGASE FAMILY MEMBER"/>
    <property type="match status" value="1"/>
</dbReference>
<dbReference type="PANTHER" id="PTHR23135:SF4">
    <property type="entry name" value="UDP-N-ACETYLMURAMOYL-L-ALANYL-D-GLUTAMATE--2,6-DIAMINOPIMELATE LIGASE MURE HOMOLOG, CHLOROPLASTIC"/>
    <property type="match status" value="1"/>
</dbReference>
<dbReference type="Pfam" id="PF01225">
    <property type="entry name" value="Mur_ligase"/>
    <property type="match status" value="1"/>
</dbReference>
<dbReference type="Pfam" id="PF02875">
    <property type="entry name" value="Mur_ligase_C"/>
    <property type="match status" value="1"/>
</dbReference>
<dbReference type="Pfam" id="PF08245">
    <property type="entry name" value="Mur_ligase_M"/>
    <property type="match status" value="1"/>
</dbReference>
<dbReference type="SUPFAM" id="SSF53623">
    <property type="entry name" value="MurD-like peptide ligases, catalytic domain"/>
    <property type="match status" value="1"/>
</dbReference>
<dbReference type="SUPFAM" id="SSF53244">
    <property type="entry name" value="MurD-like peptide ligases, peptide-binding domain"/>
    <property type="match status" value="1"/>
</dbReference>
<dbReference type="SUPFAM" id="SSF63418">
    <property type="entry name" value="MurE/MurF N-terminal domain"/>
    <property type="match status" value="1"/>
</dbReference>
<accession>Q8PCK4</accession>
<feature type="chain" id="PRO_0000101974" description="UDP-N-acetylmuramoyl-L-alanyl-D-glutamate--2,6-diaminopimelate ligase">
    <location>
        <begin position="1"/>
        <end position="495"/>
    </location>
</feature>
<feature type="short sequence motif" description="Meso-diaminopimelate recognition motif">
    <location>
        <begin position="408"/>
        <end position="411"/>
    </location>
</feature>
<feature type="binding site" evidence="1">
    <location>
        <position position="29"/>
    </location>
    <ligand>
        <name>UDP-N-acetyl-alpha-D-muramoyl-L-alanyl-D-glutamate</name>
        <dbReference type="ChEBI" id="CHEBI:83900"/>
    </ligand>
</feature>
<feature type="binding site" evidence="1">
    <location>
        <begin position="111"/>
        <end position="117"/>
    </location>
    <ligand>
        <name>ATP</name>
        <dbReference type="ChEBI" id="CHEBI:30616"/>
    </ligand>
</feature>
<feature type="binding site" evidence="1">
    <location>
        <begin position="153"/>
        <end position="154"/>
    </location>
    <ligand>
        <name>UDP-N-acetyl-alpha-D-muramoyl-L-alanyl-D-glutamate</name>
        <dbReference type="ChEBI" id="CHEBI:83900"/>
    </ligand>
</feature>
<feature type="binding site" evidence="1">
    <location>
        <position position="180"/>
    </location>
    <ligand>
        <name>UDP-N-acetyl-alpha-D-muramoyl-L-alanyl-D-glutamate</name>
        <dbReference type="ChEBI" id="CHEBI:83900"/>
    </ligand>
</feature>
<feature type="binding site" evidence="1">
    <location>
        <position position="186"/>
    </location>
    <ligand>
        <name>UDP-N-acetyl-alpha-D-muramoyl-L-alanyl-D-glutamate</name>
        <dbReference type="ChEBI" id="CHEBI:83900"/>
    </ligand>
</feature>
<feature type="binding site" evidence="1">
    <location>
        <position position="188"/>
    </location>
    <ligand>
        <name>UDP-N-acetyl-alpha-D-muramoyl-L-alanyl-D-glutamate</name>
        <dbReference type="ChEBI" id="CHEBI:83900"/>
    </ligand>
</feature>
<feature type="binding site" evidence="1">
    <location>
        <position position="384"/>
    </location>
    <ligand>
        <name>meso-2,6-diaminopimelate</name>
        <dbReference type="ChEBI" id="CHEBI:57791"/>
    </ligand>
</feature>
<feature type="binding site" evidence="1">
    <location>
        <begin position="408"/>
        <end position="411"/>
    </location>
    <ligand>
        <name>meso-2,6-diaminopimelate</name>
        <dbReference type="ChEBI" id="CHEBI:57791"/>
    </ligand>
</feature>
<feature type="binding site" evidence="1">
    <location>
        <position position="459"/>
    </location>
    <ligand>
        <name>meso-2,6-diaminopimelate</name>
        <dbReference type="ChEBI" id="CHEBI:57791"/>
    </ligand>
</feature>
<feature type="binding site" evidence="1">
    <location>
        <position position="463"/>
    </location>
    <ligand>
        <name>meso-2,6-diaminopimelate</name>
        <dbReference type="ChEBI" id="CHEBI:57791"/>
    </ligand>
</feature>
<feature type="modified residue" description="N6-carboxylysine" evidence="1">
    <location>
        <position position="220"/>
    </location>
</feature>
<organism>
    <name type="scientific">Xanthomonas campestris pv. campestris (strain ATCC 33913 / DSM 3586 / NCPPB 528 / LMG 568 / P 25)</name>
    <dbReference type="NCBI Taxonomy" id="190485"/>
    <lineage>
        <taxon>Bacteria</taxon>
        <taxon>Pseudomonadati</taxon>
        <taxon>Pseudomonadota</taxon>
        <taxon>Gammaproteobacteria</taxon>
        <taxon>Lysobacterales</taxon>
        <taxon>Lysobacteraceae</taxon>
        <taxon>Xanthomonas</taxon>
    </lineage>
</organism>
<reference key="1">
    <citation type="journal article" date="2002" name="Nature">
        <title>Comparison of the genomes of two Xanthomonas pathogens with differing host specificities.</title>
        <authorList>
            <person name="da Silva A.C.R."/>
            <person name="Ferro J.A."/>
            <person name="Reinach F.C."/>
            <person name="Farah C.S."/>
            <person name="Furlan L.R."/>
            <person name="Quaggio R.B."/>
            <person name="Monteiro-Vitorello C.B."/>
            <person name="Van Sluys M.A."/>
            <person name="Almeida N.F. Jr."/>
            <person name="Alves L.M.C."/>
            <person name="do Amaral A.M."/>
            <person name="Bertolini M.C."/>
            <person name="Camargo L.E.A."/>
            <person name="Camarotte G."/>
            <person name="Cannavan F."/>
            <person name="Cardozo J."/>
            <person name="Chambergo F."/>
            <person name="Ciapina L.P."/>
            <person name="Cicarelli R.M.B."/>
            <person name="Coutinho L.L."/>
            <person name="Cursino-Santos J.R."/>
            <person name="El-Dorry H."/>
            <person name="Faria J.B."/>
            <person name="Ferreira A.J.S."/>
            <person name="Ferreira R.C.C."/>
            <person name="Ferro M.I.T."/>
            <person name="Formighieri E.F."/>
            <person name="Franco M.C."/>
            <person name="Greggio C.C."/>
            <person name="Gruber A."/>
            <person name="Katsuyama A.M."/>
            <person name="Kishi L.T."/>
            <person name="Leite R.P."/>
            <person name="Lemos E.G.M."/>
            <person name="Lemos M.V.F."/>
            <person name="Locali E.C."/>
            <person name="Machado M.A."/>
            <person name="Madeira A.M.B.N."/>
            <person name="Martinez-Rossi N.M."/>
            <person name="Martins E.C."/>
            <person name="Meidanis J."/>
            <person name="Menck C.F.M."/>
            <person name="Miyaki C.Y."/>
            <person name="Moon D.H."/>
            <person name="Moreira L.M."/>
            <person name="Novo M.T.M."/>
            <person name="Okura V.K."/>
            <person name="Oliveira M.C."/>
            <person name="Oliveira V.R."/>
            <person name="Pereira H.A."/>
            <person name="Rossi A."/>
            <person name="Sena J.A.D."/>
            <person name="Silva C."/>
            <person name="de Souza R.F."/>
            <person name="Spinola L.A.F."/>
            <person name="Takita M.A."/>
            <person name="Tamura R.E."/>
            <person name="Teixeira E.C."/>
            <person name="Tezza R.I.D."/>
            <person name="Trindade dos Santos M."/>
            <person name="Truffi D."/>
            <person name="Tsai S.M."/>
            <person name="White F.F."/>
            <person name="Setubal J.C."/>
            <person name="Kitajima J.P."/>
        </authorList>
    </citation>
    <scope>NUCLEOTIDE SEQUENCE [LARGE SCALE GENOMIC DNA]</scope>
    <source>
        <strain>ATCC 33913 / DSM 3586 / NCPPB 528 / LMG 568 / P 25</strain>
    </source>
</reference>
<keyword id="KW-0067">ATP-binding</keyword>
<keyword id="KW-0131">Cell cycle</keyword>
<keyword id="KW-0132">Cell division</keyword>
<keyword id="KW-0133">Cell shape</keyword>
<keyword id="KW-0961">Cell wall biogenesis/degradation</keyword>
<keyword id="KW-0963">Cytoplasm</keyword>
<keyword id="KW-0436">Ligase</keyword>
<keyword id="KW-0460">Magnesium</keyword>
<keyword id="KW-0547">Nucleotide-binding</keyword>
<keyword id="KW-0573">Peptidoglycan synthesis</keyword>
<keyword id="KW-1185">Reference proteome</keyword>
<sequence>MSRAMALSQLLPDVALARDVQVSGLVMDSRAVRPGDAFVAIAGFGAHGLGFAAQALASGASAILFEPPAPADLPVPADAIAVPGLRARLGVLADHFHGAPSQAMRMIGVTGTNGKTSTVQLLAQALTLLGTPTGTIGTLGVGLYGAAVPTGFTTPLVLQTHAELAQLRDAGAQAVAMEVSSHALDQGRVDAVQFDVAVFTNLTRDHLDYHGDMAQYGAAKAKLFARAGLRAAVVNLDDAFGRTLFAALDPALHAIGVSSRAQAGATVQAQDLQLDHHGIQFTLHIGEAAHPVRSPLLGRFNVDNLLAVAGALHALDIAPAQIAEVLGRLQPIHGRMNRLGGAHGAPLVVVDYAHTPDALEQALTSLRSHAQDRLICVFGCGGERDTGKRPQMAAIAEVTADVAIVTDDNPRGEDGDVIVADILRGFARPDAAIVQRDRAAAIHQAISMAGADDIVLIAGKGHEPYQEVAGVRHAFDDAAVAAQALLPRTGLGVRV</sequence>
<comment type="function">
    <text evidence="1">Catalyzes the addition of meso-diaminopimelic acid to the nucleotide precursor UDP-N-acetylmuramoyl-L-alanyl-D-glutamate (UMAG) in the biosynthesis of bacterial cell-wall peptidoglycan.</text>
</comment>
<comment type="catalytic activity">
    <reaction evidence="1">
        <text>UDP-N-acetyl-alpha-D-muramoyl-L-alanyl-D-glutamate + meso-2,6-diaminopimelate + ATP = UDP-N-acetyl-alpha-D-muramoyl-L-alanyl-gamma-D-glutamyl-meso-2,6-diaminopimelate + ADP + phosphate + H(+)</text>
        <dbReference type="Rhea" id="RHEA:23676"/>
        <dbReference type="ChEBI" id="CHEBI:15378"/>
        <dbReference type="ChEBI" id="CHEBI:30616"/>
        <dbReference type="ChEBI" id="CHEBI:43474"/>
        <dbReference type="ChEBI" id="CHEBI:57791"/>
        <dbReference type="ChEBI" id="CHEBI:83900"/>
        <dbReference type="ChEBI" id="CHEBI:83905"/>
        <dbReference type="ChEBI" id="CHEBI:456216"/>
        <dbReference type="EC" id="6.3.2.13"/>
    </reaction>
</comment>
<comment type="cofactor">
    <cofactor evidence="1">
        <name>Mg(2+)</name>
        <dbReference type="ChEBI" id="CHEBI:18420"/>
    </cofactor>
</comment>
<comment type="pathway">
    <text evidence="1">Cell wall biogenesis; peptidoglycan biosynthesis.</text>
</comment>
<comment type="subcellular location">
    <subcellularLocation>
        <location evidence="1">Cytoplasm</location>
    </subcellularLocation>
</comment>
<comment type="PTM">
    <text evidence="1">Carboxylation is probably crucial for Mg(2+) binding and, consequently, for the gamma-phosphate positioning of ATP.</text>
</comment>
<comment type="similarity">
    <text evidence="1">Belongs to the MurCDEF family. MurE subfamily.</text>
</comment>